<accession>B0JX03</accession>
<evidence type="ECO:0000255" key="1">
    <source>
        <dbReference type="HAMAP-Rule" id="MF_00735"/>
    </source>
</evidence>
<gene>
    <name evidence="1" type="primary">prmA</name>
    <name type="ordered locus">MAE_50680</name>
</gene>
<reference key="1">
    <citation type="journal article" date="2007" name="DNA Res.">
        <title>Complete genomic structure of the bloom-forming toxic cyanobacterium Microcystis aeruginosa NIES-843.</title>
        <authorList>
            <person name="Kaneko T."/>
            <person name="Nakajima N."/>
            <person name="Okamoto S."/>
            <person name="Suzuki I."/>
            <person name="Tanabe Y."/>
            <person name="Tamaoki M."/>
            <person name="Nakamura Y."/>
            <person name="Kasai F."/>
            <person name="Watanabe A."/>
            <person name="Kawashima K."/>
            <person name="Kishida Y."/>
            <person name="Ono A."/>
            <person name="Shimizu Y."/>
            <person name="Takahashi C."/>
            <person name="Minami C."/>
            <person name="Fujishiro T."/>
            <person name="Kohara M."/>
            <person name="Katoh M."/>
            <person name="Nakazaki N."/>
            <person name="Nakayama S."/>
            <person name="Yamada M."/>
            <person name="Tabata S."/>
            <person name="Watanabe M.M."/>
        </authorList>
    </citation>
    <scope>NUCLEOTIDE SEQUENCE [LARGE SCALE GENOMIC DNA]</scope>
    <source>
        <strain>NIES-843 / IAM M-247</strain>
    </source>
</reference>
<protein>
    <recommendedName>
        <fullName evidence="1">Ribosomal protein L11 methyltransferase</fullName>
        <shortName evidence="1">L11 Mtase</shortName>
        <ecNumber evidence="1">2.1.1.-</ecNumber>
    </recommendedName>
</protein>
<dbReference type="EC" id="2.1.1.-" evidence="1"/>
<dbReference type="EMBL" id="AP009552">
    <property type="protein sequence ID" value="BAG04890.1"/>
    <property type="molecule type" value="Genomic_DNA"/>
</dbReference>
<dbReference type="RefSeq" id="WP_012267500.1">
    <property type="nucleotide sequence ID" value="NC_010296.1"/>
</dbReference>
<dbReference type="SMR" id="B0JX03"/>
<dbReference type="STRING" id="449447.MAE_50680"/>
<dbReference type="PaxDb" id="449447-MAE_50680"/>
<dbReference type="EnsemblBacteria" id="BAG04890">
    <property type="protein sequence ID" value="BAG04890"/>
    <property type="gene ID" value="MAE_50680"/>
</dbReference>
<dbReference type="KEGG" id="mar:MAE_50680"/>
<dbReference type="PATRIC" id="fig|449447.4.peg.4609"/>
<dbReference type="eggNOG" id="COG2264">
    <property type="taxonomic scope" value="Bacteria"/>
</dbReference>
<dbReference type="HOGENOM" id="CLU_049382_0_1_3"/>
<dbReference type="BioCyc" id="MAER449447:MAE_RS22005-MONOMER"/>
<dbReference type="Proteomes" id="UP000001510">
    <property type="component" value="Chromosome"/>
</dbReference>
<dbReference type="GO" id="GO:0005737">
    <property type="term" value="C:cytoplasm"/>
    <property type="evidence" value="ECO:0007669"/>
    <property type="project" value="UniProtKB-SubCell"/>
</dbReference>
<dbReference type="GO" id="GO:0016279">
    <property type="term" value="F:protein-lysine N-methyltransferase activity"/>
    <property type="evidence" value="ECO:0007669"/>
    <property type="project" value="RHEA"/>
</dbReference>
<dbReference type="GO" id="GO:0032259">
    <property type="term" value="P:methylation"/>
    <property type="evidence" value="ECO:0007669"/>
    <property type="project" value="UniProtKB-KW"/>
</dbReference>
<dbReference type="CDD" id="cd02440">
    <property type="entry name" value="AdoMet_MTases"/>
    <property type="match status" value="1"/>
</dbReference>
<dbReference type="Gene3D" id="3.40.50.150">
    <property type="entry name" value="Vaccinia Virus protein VP39"/>
    <property type="match status" value="1"/>
</dbReference>
<dbReference type="HAMAP" id="MF_00735">
    <property type="entry name" value="Methyltr_PrmA"/>
    <property type="match status" value="1"/>
</dbReference>
<dbReference type="InterPro" id="IPR050078">
    <property type="entry name" value="Ribosomal_L11_MeTrfase_PrmA"/>
</dbReference>
<dbReference type="InterPro" id="IPR004498">
    <property type="entry name" value="Ribosomal_PrmA_MeTrfase"/>
</dbReference>
<dbReference type="InterPro" id="IPR029063">
    <property type="entry name" value="SAM-dependent_MTases_sf"/>
</dbReference>
<dbReference type="NCBIfam" id="TIGR00406">
    <property type="entry name" value="prmA"/>
    <property type="match status" value="1"/>
</dbReference>
<dbReference type="PANTHER" id="PTHR43648">
    <property type="entry name" value="ELECTRON TRANSFER FLAVOPROTEIN BETA SUBUNIT LYSINE METHYLTRANSFERASE"/>
    <property type="match status" value="1"/>
</dbReference>
<dbReference type="PANTHER" id="PTHR43648:SF1">
    <property type="entry name" value="ELECTRON TRANSFER FLAVOPROTEIN BETA SUBUNIT LYSINE METHYLTRANSFERASE"/>
    <property type="match status" value="1"/>
</dbReference>
<dbReference type="Pfam" id="PF06325">
    <property type="entry name" value="PrmA"/>
    <property type="match status" value="1"/>
</dbReference>
<dbReference type="PIRSF" id="PIRSF000401">
    <property type="entry name" value="RPL11_MTase"/>
    <property type="match status" value="1"/>
</dbReference>
<dbReference type="SUPFAM" id="SSF53335">
    <property type="entry name" value="S-adenosyl-L-methionine-dependent methyltransferases"/>
    <property type="match status" value="1"/>
</dbReference>
<name>PRMA_MICAN</name>
<comment type="function">
    <text evidence="1">Methylates ribosomal protein L11.</text>
</comment>
<comment type="catalytic activity">
    <reaction evidence="1">
        <text>L-lysyl-[protein] + 3 S-adenosyl-L-methionine = N(6),N(6),N(6)-trimethyl-L-lysyl-[protein] + 3 S-adenosyl-L-homocysteine + 3 H(+)</text>
        <dbReference type="Rhea" id="RHEA:54192"/>
        <dbReference type="Rhea" id="RHEA-COMP:9752"/>
        <dbReference type="Rhea" id="RHEA-COMP:13826"/>
        <dbReference type="ChEBI" id="CHEBI:15378"/>
        <dbReference type="ChEBI" id="CHEBI:29969"/>
        <dbReference type="ChEBI" id="CHEBI:57856"/>
        <dbReference type="ChEBI" id="CHEBI:59789"/>
        <dbReference type="ChEBI" id="CHEBI:61961"/>
    </reaction>
</comment>
<comment type="subcellular location">
    <subcellularLocation>
        <location evidence="1">Cytoplasm</location>
    </subcellularLocation>
</comment>
<comment type="similarity">
    <text evidence="1">Belongs to the methyltransferase superfamily. PrmA family.</text>
</comment>
<organism>
    <name type="scientific">Microcystis aeruginosa (strain NIES-843 / IAM M-2473)</name>
    <dbReference type="NCBI Taxonomy" id="449447"/>
    <lineage>
        <taxon>Bacteria</taxon>
        <taxon>Bacillati</taxon>
        <taxon>Cyanobacteriota</taxon>
        <taxon>Cyanophyceae</taxon>
        <taxon>Oscillatoriophycideae</taxon>
        <taxon>Chroococcales</taxon>
        <taxon>Microcystaceae</taxon>
        <taxon>Microcystis</taxon>
    </lineage>
</organism>
<proteinExistence type="inferred from homology"/>
<keyword id="KW-0963">Cytoplasm</keyword>
<keyword id="KW-0489">Methyltransferase</keyword>
<keyword id="KW-0949">S-adenosyl-L-methionine</keyword>
<keyword id="KW-0808">Transferase</keyword>
<feature type="chain" id="PRO_1000192646" description="Ribosomal protein L11 methyltransferase">
    <location>
        <begin position="1"/>
        <end position="298"/>
    </location>
</feature>
<feature type="binding site" evidence="1">
    <location>
        <position position="139"/>
    </location>
    <ligand>
        <name>S-adenosyl-L-methionine</name>
        <dbReference type="ChEBI" id="CHEBI:59789"/>
    </ligand>
</feature>
<feature type="binding site" evidence="1">
    <location>
        <position position="163"/>
    </location>
    <ligand>
        <name>S-adenosyl-L-methionine</name>
        <dbReference type="ChEBI" id="CHEBI:59789"/>
    </ligand>
</feature>
<feature type="binding site" evidence="1">
    <location>
        <position position="185"/>
    </location>
    <ligand>
        <name>S-adenosyl-L-methionine</name>
        <dbReference type="ChEBI" id="CHEBI:59789"/>
    </ligand>
</feature>
<feature type="binding site" evidence="1">
    <location>
        <position position="232"/>
    </location>
    <ligand>
        <name>S-adenosyl-L-methionine</name>
        <dbReference type="ChEBI" id="CHEBI:59789"/>
    </ligand>
</feature>
<sequence>MSNSWWEITVLCEPSLEETVFWRLEDFGCSGTATAKKQSSLEVKAYIPEIKAQLLDLEALSLWLKQDALILGFPEPVSHWQLMDEEDWASSWKQHWQISEIGDRFLICPAWLNPPENNQRLVIKIDPGSAFGTGTHPTTQLCLESLEMRLSSHPEPKIIADIGCGSGILAIGAILLGAKKVYAVDTDPLAVNATRSNRHLNRINPENLAINQGSVEELLELIPDGVDGIVCNILAETIIALMPEINRLAKPTTWGILSGILVTQAQAVTDILEPQGWTVAALWKRQEWCCLQIRRALD</sequence>